<feature type="chain" id="PRO_0000271126" description="Putative uncharacterized protein ERCC6L2-AS1">
    <location>
        <begin position="1"/>
        <end position="136"/>
    </location>
</feature>
<feature type="region of interest" description="Disordered" evidence="1">
    <location>
        <begin position="1"/>
        <end position="51"/>
    </location>
</feature>
<feature type="compositionally biased region" description="Basic and acidic residues" evidence="1">
    <location>
        <begin position="37"/>
        <end position="46"/>
    </location>
</feature>
<comment type="caution">
    <text evidence="2">Product of a dubious CDS prediction. May be a non-coding RNA.</text>
</comment>
<name>CI130_HUMAN</name>
<accession>Q8WZB0</accession>
<keyword id="KW-1185">Reference proteome</keyword>
<proteinExistence type="uncertain"/>
<reference key="1">
    <citation type="submission" date="1999-10" db="EMBL/GenBank/DDBJ databases">
        <authorList>
            <person name="Yu Y."/>
            <person name="Li G.-Y."/>
        </authorList>
    </citation>
    <scope>NUCLEOTIDE SEQUENCE [MRNA]</scope>
</reference>
<reference key="2">
    <citation type="journal article" date="2004" name="Nature">
        <title>DNA sequence and analysis of human chromosome 9.</title>
        <authorList>
            <person name="Humphray S.J."/>
            <person name="Oliver K."/>
            <person name="Hunt A.R."/>
            <person name="Plumb R.W."/>
            <person name="Loveland J.E."/>
            <person name="Howe K.L."/>
            <person name="Andrews T.D."/>
            <person name="Searle S."/>
            <person name="Hunt S.E."/>
            <person name="Scott C.E."/>
            <person name="Jones M.C."/>
            <person name="Ainscough R."/>
            <person name="Almeida J.P."/>
            <person name="Ambrose K.D."/>
            <person name="Ashwell R.I.S."/>
            <person name="Babbage A.K."/>
            <person name="Babbage S."/>
            <person name="Bagguley C.L."/>
            <person name="Bailey J."/>
            <person name="Banerjee R."/>
            <person name="Barker D.J."/>
            <person name="Barlow K.F."/>
            <person name="Bates K."/>
            <person name="Beasley H."/>
            <person name="Beasley O."/>
            <person name="Bird C.P."/>
            <person name="Bray-Allen S."/>
            <person name="Brown A.J."/>
            <person name="Brown J.Y."/>
            <person name="Burford D."/>
            <person name="Burrill W."/>
            <person name="Burton J."/>
            <person name="Carder C."/>
            <person name="Carter N.P."/>
            <person name="Chapman J.C."/>
            <person name="Chen Y."/>
            <person name="Clarke G."/>
            <person name="Clark S.Y."/>
            <person name="Clee C.M."/>
            <person name="Clegg S."/>
            <person name="Collier R.E."/>
            <person name="Corby N."/>
            <person name="Crosier M."/>
            <person name="Cummings A.T."/>
            <person name="Davies J."/>
            <person name="Dhami P."/>
            <person name="Dunn M."/>
            <person name="Dutta I."/>
            <person name="Dyer L.W."/>
            <person name="Earthrowl M.E."/>
            <person name="Faulkner L."/>
            <person name="Fleming C.J."/>
            <person name="Frankish A."/>
            <person name="Frankland J.A."/>
            <person name="French L."/>
            <person name="Fricker D.G."/>
            <person name="Garner P."/>
            <person name="Garnett J."/>
            <person name="Ghori J."/>
            <person name="Gilbert J.G.R."/>
            <person name="Glison C."/>
            <person name="Grafham D.V."/>
            <person name="Gribble S."/>
            <person name="Griffiths C."/>
            <person name="Griffiths-Jones S."/>
            <person name="Grocock R."/>
            <person name="Guy J."/>
            <person name="Hall R.E."/>
            <person name="Hammond S."/>
            <person name="Harley J.L."/>
            <person name="Harrison E.S.I."/>
            <person name="Hart E.A."/>
            <person name="Heath P.D."/>
            <person name="Henderson C.D."/>
            <person name="Hopkins B.L."/>
            <person name="Howard P.J."/>
            <person name="Howden P.J."/>
            <person name="Huckle E."/>
            <person name="Johnson C."/>
            <person name="Johnson D."/>
            <person name="Joy A.A."/>
            <person name="Kay M."/>
            <person name="Keenan S."/>
            <person name="Kershaw J.K."/>
            <person name="Kimberley A.M."/>
            <person name="King A."/>
            <person name="Knights A."/>
            <person name="Laird G.K."/>
            <person name="Langford C."/>
            <person name="Lawlor S."/>
            <person name="Leongamornlert D.A."/>
            <person name="Leversha M."/>
            <person name="Lloyd C."/>
            <person name="Lloyd D.M."/>
            <person name="Lovell J."/>
            <person name="Martin S."/>
            <person name="Mashreghi-Mohammadi M."/>
            <person name="Matthews L."/>
            <person name="McLaren S."/>
            <person name="McLay K.E."/>
            <person name="McMurray A."/>
            <person name="Milne S."/>
            <person name="Nickerson T."/>
            <person name="Nisbett J."/>
            <person name="Nordsiek G."/>
            <person name="Pearce A.V."/>
            <person name="Peck A.I."/>
            <person name="Porter K.M."/>
            <person name="Pandian R."/>
            <person name="Pelan S."/>
            <person name="Phillimore B."/>
            <person name="Povey S."/>
            <person name="Ramsey Y."/>
            <person name="Rand V."/>
            <person name="Scharfe M."/>
            <person name="Sehra H.K."/>
            <person name="Shownkeen R."/>
            <person name="Sims S.K."/>
            <person name="Skuce C.D."/>
            <person name="Smith M."/>
            <person name="Steward C.A."/>
            <person name="Swarbreck D."/>
            <person name="Sycamore N."/>
            <person name="Tester J."/>
            <person name="Thorpe A."/>
            <person name="Tracey A."/>
            <person name="Tromans A."/>
            <person name="Thomas D.W."/>
            <person name="Wall M."/>
            <person name="Wallis J.M."/>
            <person name="West A.P."/>
            <person name="Whitehead S.L."/>
            <person name="Willey D.L."/>
            <person name="Williams S.A."/>
            <person name="Wilming L."/>
            <person name="Wray P.W."/>
            <person name="Young L."/>
            <person name="Ashurst J.L."/>
            <person name="Coulson A."/>
            <person name="Blocker H."/>
            <person name="Durbin R.M."/>
            <person name="Sulston J.E."/>
            <person name="Hubbard T."/>
            <person name="Jackson M.J."/>
            <person name="Bentley D.R."/>
            <person name="Beck S."/>
            <person name="Rogers J."/>
            <person name="Dunham I."/>
        </authorList>
    </citation>
    <scope>NUCLEOTIDE SEQUENCE [LARGE SCALE GENOMIC DNA]</scope>
</reference>
<gene>
    <name evidence="3" type="primary">ERCC6L2-AS1</name>
    <name type="synonym">C9orf130</name>
    <name type="synonym">LINC00476</name>
    <name type="ORF">NAG12</name>
</gene>
<evidence type="ECO:0000256" key="1">
    <source>
        <dbReference type="SAM" id="MobiDB-lite"/>
    </source>
</evidence>
<evidence type="ECO:0000305" key="2"/>
<evidence type="ECO:0000312" key="3">
    <source>
        <dbReference type="HGNC" id="HGNC:27858"/>
    </source>
</evidence>
<protein>
    <recommendedName>
        <fullName evidence="3">Putative uncharacterized protein ERCC6L2-AS1</fullName>
    </recommendedName>
    <alternativeName>
        <fullName evidence="3">ERCC6L2 antisense RNA 1</fullName>
    </alternativeName>
    <alternativeName>
        <fullName>Nasopharyngeal carcinoma-associated gene 12 protein</fullName>
    </alternativeName>
</protein>
<organism>
    <name type="scientific">Homo sapiens</name>
    <name type="common">Human</name>
    <dbReference type="NCBI Taxonomy" id="9606"/>
    <lineage>
        <taxon>Eukaryota</taxon>
        <taxon>Metazoa</taxon>
        <taxon>Chordata</taxon>
        <taxon>Craniata</taxon>
        <taxon>Vertebrata</taxon>
        <taxon>Euteleostomi</taxon>
        <taxon>Mammalia</taxon>
        <taxon>Eutheria</taxon>
        <taxon>Euarchontoglires</taxon>
        <taxon>Primates</taxon>
        <taxon>Haplorrhini</taxon>
        <taxon>Catarrhini</taxon>
        <taxon>Hominidae</taxon>
        <taxon>Homo</taxon>
    </lineage>
</organism>
<sequence>MAANATSGRPPSIALRQPEATGWRRGIPAKVATKGTQAEREGDVRSGGRARGRCVRLAKRCSPSSLGLRRRRRRTGGRQGDPQIFLGSDFRLLTPANSNPVLENPARTGSRIVIGISRERNLPFCGRSNLPDVSSL</sequence>
<dbReference type="EMBL" id="AF194971">
    <property type="protein sequence ID" value="AAL35408.1"/>
    <property type="molecule type" value="mRNA"/>
</dbReference>
<dbReference type="EMBL" id="AL161454">
    <property type="status" value="NOT_ANNOTATED_CDS"/>
    <property type="molecule type" value="Genomic_DNA"/>
</dbReference>
<dbReference type="iPTMnet" id="Q8WZB0"/>
<dbReference type="PhosphoSitePlus" id="Q8WZB0"/>
<dbReference type="BioMuta" id="HGNC:27858"/>
<dbReference type="MassIVE" id="Q8WZB0"/>
<dbReference type="ProteomicsDB" id="75249"/>
<dbReference type="AGR" id="HGNC:27858"/>
<dbReference type="GeneCards" id="ERCC6L2-AS1"/>
<dbReference type="HGNC" id="HGNC:27858">
    <property type="gene designation" value="ERCC6L2-AS1"/>
</dbReference>
<dbReference type="neXtProt" id="NX_Q8WZB0"/>
<dbReference type="InParanoid" id="Q8WZB0"/>
<dbReference type="PAN-GO" id="Q8WZB0">
    <property type="GO annotations" value="0 GO annotations based on evolutionary models"/>
</dbReference>
<dbReference type="ChiTaRS" id="LINC00476">
    <property type="organism name" value="human"/>
</dbReference>
<dbReference type="Pharos" id="Q8WZB0">
    <property type="development level" value="Tdark"/>
</dbReference>
<dbReference type="Proteomes" id="UP000005640">
    <property type="component" value="Unplaced"/>
</dbReference>
<dbReference type="RNAct" id="Q8WZB0">
    <property type="molecule type" value="protein"/>
</dbReference>